<reference key="1">
    <citation type="journal article" date="2007" name="J. Bacteriol.">
        <title>Genome sequence of Avery's virulent serotype 2 strain D39 of Streptococcus pneumoniae and comparison with that of unencapsulated laboratory strain R6.</title>
        <authorList>
            <person name="Lanie J.A."/>
            <person name="Ng W.-L."/>
            <person name="Kazmierczak K.M."/>
            <person name="Andrzejewski T.M."/>
            <person name="Davidsen T.M."/>
            <person name="Wayne K.J."/>
            <person name="Tettelin H."/>
            <person name="Glass J.I."/>
            <person name="Winkler M.E."/>
        </authorList>
    </citation>
    <scope>NUCLEOTIDE SEQUENCE [LARGE SCALE GENOMIC DNA]</scope>
    <source>
        <strain>D39 / NCTC 7466</strain>
    </source>
</reference>
<evidence type="ECO:0000255" key="1">
    <source>
        <dbReference type="HAMAP-Rule" id="MF_00004"/>
    </source>
</evidence>
<evidence type="ECO:0000305" key="2"/>
<organism>
    <name type="scientific">Streptococcus pneumoniae serotype 2 (strain D39 / NCTC 7466)</name>
    <dbReference type="NCBI Taxonomy" id="373153"/>
    <lineage>
        <taxon>Bacteria</taxon>
        <taxon>Bacillati</taxon>
        <taxon>Bacillota</taxon>
        <taxon>Bacilli</taxon>
        <taxon>Lactobacillales</taxon>
        <taxon>Streptococcaceae</taxon>
        <taxon>Streptococcus</taxon>
    </lineage>
</organism>
<sequence length="170" mass="18729">MNLKDYIATIENYPKEGITFRDISPLMADGNAYSYAVREIVQYATDKKVDMIVGPEARGFIVGCPVAFELGIGFAPVRKPGKLPREVISADYEKEYGVDTLTMHADAIKPGQRVLIVDDLLATGGTVKATIEMIEKLGGVMAGCAFLVELDELNGREKIGDYDYKVLMHY</sequence>
<name>APT_STRP2</name>
<keyword id="KW-0963">Cytoplasm</keyword>
<keyword id="KW-0328">Glycosyltransferase</keyword>
<keyword id="KW-0660">Purine salvage</keyword>
<keyword id="KW-1185">Reference proteome</keyword>
<keyword id="KW-0808">Transferase</keyword>
<accession>Q04JH1</accession>
<feature type="chain" id="PRO_0000321413" description="Adenine phosphoribosyltransferase">
    <location>
        <begin position="1"/>
        <end position="170"/>
    </location>
</feature>
<comment type="function">
    <text evidence="1">Catalyzes a salvage reaction resulting in the formation of AMP, that is energically less costly than de novo synthesis.</text>
</comment>
<comment type="catalytic activity">
    <reaction evidence="1">
        <text>AMP + diphosphate = 5-phospho-alpha-D-ribose 1-diphosphate + adenine</text>
        <dbReference type="Rhea" id="RHEA:16609"/>
        <dbReference type="ChEBI" id="CHEBI:16708"/>
        <dbReference type="ChEBI" id="CHEBI:33019"/>
        <dbReference type="ChEBI" id="CHEBI:58017"/>
        <dbReference type="ChEBI" id="CHEBI:456215"/>
        <dbReference type="EC" id="2.4.2.7"/>
    </reaction>
</comment>
<comment type="pathway">
    <text evidence="1">Purine metabolism; AMP biosynthesis via salvage pathway; AMP from adenine: step 1/1.</text>
</comment>
<comment type="subunit">
    <text evidence="1">Homodimer.</text>
</comment>
<comment type="subcellular location">
    <subcellularLocation>
        <location evidence="1">Cytoplasm</location>
    </subcellularLocation>
</comment>
<comment type="similarity">
    <text evidence="1">Belongs to the purine/pyrimidine phosphoribosyltransferase family.</text>
</comment>
<comment type="sequence caution" evidence="2">
    <conflict type="erroneous initiation">
        <sequence resource="EMBL-CDS" id="ABJ54553"/>
    </conflict>
</comment>
<protein>
    <recommendedName>
        <fullName evidence="1">Adenine phosphoribosyltransferase</fullName>
        <shortName evidence="1">APRT</shortName>
        <ecNumber evidence="1">2.4.2.7</ecNumber>
    </recommendedName>
</protein>
<proteinExistence type="inferred from homology"/>
<gene>
    <name evidence="1" type="primary">apt</name>
    <name type="ordered locus">SPD_1407</name>
</gene>
<dbReference type="EC" id="2.4.2.7" evidence="1"/>
<dbReference type="EMBL" id="CP000410">
    <property type="protein sequence ID" value="ABJ54553.1"/>
    <property type="status" value="ALT_INIT"/>
    <property type="molecule type" value="Genomic_DNA"/>
</dbReference>
<dbReference type="RefSeq" id="WP_001049323.1">
    <property type="nucleotide sequence ID" value="NZ_JAMLJR010000008.1"/>
</dbReference>
<dbReference type="SMR" id="Q04JH1"/>
<dbReference type="PaxDb" id="373153-SPD_1407"/>
<dbReference type="KEGG" id="spd:SPD_1407"/>
<dbReference type="eggNOG" id="COG0503">
    <property type="taxonomic scope" value="Bacteria"/>
</dbReference>
<dbReference type="HOGENOM" id="CLU_063339_3_0_9"/>
<dbReference type="BioCyc" id="SPNE373153:G1G6V-1513-MONOMER"/>
<dbReference type="UniPathway" id="UPA00588">
    <property type="reaction ID" value="UER00646"/>
</dbReference>
<dbReference type="Proteomes" id="UP000001452">
    <property type="component" value="Chromosome"/>
</dbReference>
<dbReference type="GO" id="GO:0005737">
    <property type="term" value="C:cytoplasm"/>
    <property type="evidence" value="ECO:0007669"/>
    <property type="project" value="UniProtKB-SubCell"/>
</dbReference>
<dbReference type="GO" id="GO:0002055">
    <property type="term" value="F:adenine binding"/>
    <property type="evidence" value="ECO:0007669"/>
    <property type="project" value="TreeGrafter"/>
</dbReference>
<dbReference type="GO" id="GO:0003999">
    <property type="term" value="F:adenine phosphoribosyltransferase activity"/>
    <property type="evidence" value="ECO:0007669"/>
    <property type="project" value="UniProtKB-UniRule"/>
</dbReference>
<dbReference type="GO" id="GO:0016208">
    <property type="term" value="F:AMP binding"/>
    <property type="evidence" value="ECO:0007669"/>
    <property type="project" value="TreeGrafter"/>
</dbReference>
<dbReference type="GO" id="GO:0006168">
    <property type="term" value="P:adenine salvage"/>
    <property type="evidence" value="ECO:0007669"/>
    <property type="project" value="InterPro"/>
</dbReference>
<dbReference type="GO" id="GO:0044209">
    <property type="term" value="P:AMP salvage"/>
    <property type="evidence" value="ECO:0007669"/>
    <property type="project" value="UniProtKB-UniRule"/>
</dbReference>
<dbReference type="GO" id="GO:0006166">
    <property type="term" value="P:purine ribonucleoside salvage"/>
    <property type="evidence" value="ECO:0007669"/>
    <property type="project" value="UniProtKB-KW"/>
</dbReference>
<dbReference type="CDD" id="cd06223">
    <property type="entry name" value="PRTases_typeI"/>
    <property type="match status" value="1"/>
</dbReference>
<dbReference type="FunFam" id="3.40.50.2020:FF:000004">
    <property type="entry name" value="Adenine phosphoribosyltransferase"/>
    <property type="match status" value="1"/>
</dbReference>
<dbReference type="Gene3D" id="3.40.50.2020">
    <property type="match status" value="1"/>
</dbReference>
<dbReference type="HAMAP" id="MF_00004">
    <property type="entry name" value="Aden_phosphoribosyltr"/>
    <property type="match status" value="1"/>
</dbReference>
<dbReference type="InterPro" id="IPR005764">
    <property type="entry name" value="Ade_phspho_trans"/>
</dbReference>
<dbReference type="InterPro" id="IPR000836">
    <property type="entry name" value="PRibTrfase_dom"/>
</dbReference>
<dbReference type="InterPro" id="IPR029057">
    <property type="entry name" value="PRTase-like"/>
</dbReference>
<dbReference type="InterPro" id="IPR050054">
    <property type="entry name" value="UPRTase/APRTase"/>
</dbReference>
<dbReference type="NCBIfam" id="TIGR01090">
    <property type="entry name" value="apt"/>
    <property type="match status" value="1"/>
</dbReference>
<dbReference type="NCBIfam" id="NF002633">
    <property type="entry name" value="PRK02304.1-2"/>
    <property type="match status" value="1"/>
</dbReference>
<dbReference type="NCBIfam" id="NF002634">
    <property type="entry name" value="PRK02304.1-3"/>
    <property type="match status" value="1"/>
</dbReference>
<dbReference type="NCBIfam" id="NF002636">
    <property type="entry name" value="PRK02304.1-5"/>
    <property type="match status" value="1"/>
</dbReference>
<dbReference type="PANTHER" id="PTHR32315">
    <property type="entry name" value="ADENINE PHOSPHORIBOSYLTRANSFERASE"/>
    <property type="match status" value="1"/>
</dbReference>
<dbReference type="PANTHER" id="PTHR32315:SF3">
    <property type="entry name" value="ADENINE PHOSPHORIBOSYLTRANSFERASE"/>
    <property type="match status" value="1"/>
</dbReference>
<dbReference type="Pfam" id="PF00156">
    <property type="entry name" value="Pribosyltran"/>
    <property type="match status" value="1"/>
</dbReference>
<dbReference type="SUPFAM" id="SSF53271">
    <property type="entry name" value="PRTase-like"/>
    <property type="match status" value="1"/>
</dbReference>
<dbReference type="PROSITE" id="PS00103">
    <property type="entry name" value="PUR_PYR_PR_TRANSFER"/>
    <property type="match status" value="1"/>
</dbReference>